<evidence type="ECO:0000250" key="1">
    <source>
        <dbReference type="UniProtKB" id="O59791"/>
    </source>
</evidence>
<evidence type="ECO:0000250" key="2">
    <source>
        <dbReference type="UniProtKB" id="Q9GZT4"/>
    </source>
</evidence>
<evidence type="ECO:0000250" key="3">
    <source>
        <dbReference type="UniProtKB" id="Q9QZX7"/>
    </source>
</evidence>
<evidence type="ECO:0000269" key="4">
    <source>
    </source>
</evidence>
<evidence type="ECO:0000269" key="5">
    <source>
    </source>
</evidence>
<evidence type="ECO:0000303" key="6">
    <source>
    </source>
</evidence>
<evidence type="ECO:0000305" key="7"/>
<evidence type="ECO:0000312" key="8">
    <source>
        <dbReference type="EMBL" id="CAE01865.2"/>
    </source>
</evidence>
<evidence type="ECO:0000312" key="9">
    <source>
        <dbReference type="EMBL" id="EAZ31592.1"/>
    </source>
</evidence>
<gene>
    <name evidence="6" type="primary">SERR</name>
    <name type="ordered locus">Os04g0555900</name>
    <name type="ordered locus">LOC_Os04g46930</name>
    <name evidence="9" type="ORF">OsJ_15733</name>
    <name evidence="8" type="ORF">OSJNBb0012E24.7</name>
</gene>
<name>SRR_ORYSJ</name>
<sequence length="339" mass="35597">MGSRGGSGGDGAESHGYAADIHSIREAQARIAPYVHKTPVLSSTSIDAIVGKQLFFKCECFQKAGAFKIRGASNSIFALDDDEASKGVVTHSSGNHAAAVALAAKLRGIPAYIVIPRNAPACKVDNVKRYGGHIIWSDVSIESRESVAKRVQEETGAILVHPFNNKNTISGQGTVSLELLEEVPEIDTIIVPISGGGLISGVALAAKAINPSIRILAAEPKGADDSAQSKAAGKIITLPSTNTIADGLRAFLGDLTWPVVRDLVDDIIVVDDNAIVDAMKMCYEMLKVAVEPSGAIGLAAALSDEFKQSSAWHESSKIGIIVSGGNVDLGVLWESLYKR</sequence>
<proteinExistence type="evidence at protein level"/>
<organism>
    <name type="scientific">Oryza sativa subsp. japonica</name>
    <name type="common">Rice</name>
    <dbReference type="NCBI Taxonomy" id="39947"/>
    <lineage>
        <taxon>Eukaryota</taxon>
        <taxon>Viridiplantae</taxon>
        <taxon>Streptophyta</taxon>
        <taxon>Embryophyta</taxon>
        <taxon>Tracheophyta</taxon>
        <taxon>Spermatophyta</taxon>
        <taxon>Magnoliopsida</taxon>
        <taxon>Liliopsida</taxon>
        <taxon>Poales</taxon>
        <taxon>Poaceae</taxon>
        <taxon>BOP clade</taxon>
        <taxon>Oryzoideae</taxon>
        <taxon>Oryzeae</taxon>
        <taxon>Oryzinae</taxon>
        <taxon>Oryza</taxon>
        <taxon>Oryza sativa</taxon>
    </lineage>
</organism>
<dbReference type="EC" id="5.1.1.18" evidence="4 5"/>
<dbReference type="EC" id="4.3.1.18" evidence="4 5"/>
<dbReference type="EC" id="4.3.1.17" evidence="4 5"/>
<dbReference type="EMBL" id="AB425957">
    <property type="protein sequence ID" value="BAH59439.1"/>
    <property type="molecule type" value="mRNA"/>
</dbReference>
<dbReference type="EMBL" id="AL606647">
    <property type="protein sequence ID" value="CAE01865.2"/>
    <property type="molecule type" value="Genomic_DNA"/>
</dbReference>
<dbReference type="EMBL" id="AP008210">
    <property type="protein sequence ID" value="BAF15435.1"/>
    <property type="molecule type" value="Genomic_DNA"/>
</dbReference>
<dbReference type="EMBL" id="AP014960">
    <property type="protein sequence ID" value="BAS90428.1"/>
    <property type="molecule type" value="Genomic_DNA"/>
</dbReference>
<dbReference type="EMBL" id="CM000141">
    <property type="protein sequence ID" value="EAZ31592.1"/>
    <property type="molecule type" value="Genomic_DNA"/>
</dbReference>
<dbReference type="EMBL" id="AK063168">
    <property type="protein sequence ID" value="BAG88574.1"/>
    <property type="molecule type" value="mRNA"/>
</dbReference>
<dbReference type="RefSeq" id="XP_015637224.1">
    <property type="nucleotide sequence ID" value="XM_015781738.1"/>
</dbReference>
<dbReference type="RefSeq" id="XP_015637225.1">
    <property type="nucleotide sequence ID" value="XM_015781739.1"/>
</dbReference>
<dbReference type="RefSeq" id="XP_015637226.1">
    <property type="nucleotide sequence ID" value="XM_015781740.1"/>
</dbReference>
<dbReference type="RefSeq" id="XP_015637227.1">
    <property type="nucleotide sequence ID" value="XM_015781741.1"/>
</dbReference>
<dbReference type="RefSeq" id="XP_015637228.1">
    <property type="nucleotide sequence ID" value="XM_015781742.1"/>
</dbReference>
<dbReference type="SMR" id="Q7XSN8"/>
<dbReference type="FunCoup" id="Q7XSN8">
    <property type="interactions" value="672"/>
</dbReference>
<dbReference type="STRING" id="39947.Q7XSN8"/>
<dbReference type="PaxDb" id="39947-Q7XSN8"/>
<dbReference type="EnsemblPlants" id="Os04t0555900-01">
    <property type="protein sequence ID" value="Os04t0555900-01"/>
    <property type="gene ID" value="Os04g0555900"/>
</dbReference>
<dbReference type="GeneID" id="4336624"/>
<dbReference type="Gramene" id="Os04t0555900-01">
    <property type="protein sequence ID" value="Os04t0555900-01"/>
    <property type="gene ID" value="Os04g0555900"/>
</dbReference>
<dbReference type="KEGG" id="dosa:Os04g0555900"/>
<dbReference type="KEGG" id="osa:4336624"/>
<dbReference type="eggNOG" id="KOG1251">
    <property type="taxonomic scope" value="Eukaryota"/>
</dbReference>
<dbReference type="HOGENOM" id="CLU_021152_4_2_1"/>
<dbReference type="InParanoid" id="Q7XSN8"/>
<dbReference type="OMA" id="LIHPFDH"/>
<dbReference type="OrthoDB" id="4418812at2759"/>
<dbReference type="BRENDA" id="5.1.1.18">
    <property type="organism ID" value="4460"/>
</dbReference>
<dbReference type="Proteomes" id="UP000000763">
    <property type="component" value="Chromosome 4"/>
</dbReference>
<dbReference type="Proteomes" id="UP000007752">
    <property type="component" value="Chromosome 4"/>
</dbReference>
<dbReference type="Proteomes" id="UP000059680">
    <property type="component" value="Chromosome 4"/>
</dbReference>
<dbReference type="GO" id="GO:0005524">
    <property type="term" value="F:ATP binding"/>
    <property type="evidence" value="ECO:0000318"/>
    <property type="project" value="GO_Central"/>
</dbReference>
<dbReference type="GO" id="GO:0008721">
    <property type="term" value="F:D-serine ammonia-lyase activity"/>
    <property type="evidence" value="ECO:0000314"/>
    <property type="project" value="UniProtKB"/>
</dbReference>
<dbReference type="GO" id="GO:0003941">
    <property type="term" value="F:L-serine ammonia-lyase activity"/>
    <property type="evidence" value="ECO:0000314"/>
    <property type="project" value="UniProtKB"/>
</dbReference>
<dbReference type="GO" id="GO:0000287">
    <property type="term" value="F:magnesium ion binding"/>
    <property type="evidence" value="ECO:0000318"/>
    <property type="project" value="GO_Central"/>
</dbReference>
<dbReference type="GO" id="GO:0030170">
    <property type="term" value="F:pyridoxal phosphate binding"/>
    <property type="evidence" value="ECO:0000318"/>
    <property type="project" value="GO_Central"/>
</dbReference>
<dbReference type="GO" id="GO:0030378">
    <property type="term" value="F:serine racemase activity"/>
    <property type="evidence" value="ECO:0000318"/>
    <property type="project" value="GO_Central"/>
</dbReference>
<dbReference type="GO" id="GO:0018114">
    <property type="term" value="F:threonine racemase activity"/>
    <property type="evidence" value="ECO:0000318"/>
    <property type="project" value="GO_Central"/>
</dbReference>
<dbReference type="GO" id="GO:0070179">
    <property type="term" value="P:D-serine biosynthetic process"/>
    <property type="evidence" value="ECO:0000318"/>
    <property type="project" value="GO_Central"/>
</dbReference>
<dbReference type="GO" id="GO:0070178">
    <property type="term" value="P:D-serine metabolic process"/>
    <property type="evidence" value="ECO:0000314"/>
    <property type="project" value="UniProtKB"/>
</dbReference>
<dbReference type="GO" id="GO:0006563">
    <property type="term" value="P:L-serine metabolic process"/>
    <property type="evidence" value="ECO:0000314"/>
    <property type="project" value="UniProtKB"/>
</dbReference>
<dbReference type="CDD" id="cd01562">
    <property type="entry name" value="Thr-dehyd"/>
    <property type="match status" value="1"/>
</dbReference>
<dbReference type="FunFam" id="3.40.50.1100:FF:000007">
    <property type="entry name" value="L-threonine dehydratase catabolic TdcB"/>
    <property type="match status" value="1"/>
</dbReference>
<dbReference type="FunFam" id="3.40.50.1100:FF:000005">
    <property type="entry name" value="Threonine dehydratase catabolic"/>
    <property type="match status" value="1"/>
</dbReference>
<dbReference type="Gene3D" id="3.40.50.1100">
    <property type="match status" value="2"/>
</dbReference>
<dbReference type="InterPro" id="IPR001926">
    <property type="entry name" value="TrpB-like_PALP"/>
</dbReference>
<dbReference type="InterPro" id="IPR036052">
    <property type="entry name" value="TrpB-like_PALP_sf"/>
</dbReference>
<dbReference type="PANTHER" id="PTHR43050">
    <property type="entry name" value="SERINE / THREONINE RACEMASE FAMILY MEMBER"/>
    <property type="match status" value="1"/>
</dbReference>
<dbReference type="PANTHER" id="PTHR43050:SF1">
    <property type="entry name" value="SERINE RACEMASE"/>
    <property type="match status" value="1"/>
</dbReference>
<dbReference type="Pfam" id="PF00291">
    <property type="entry name" value="PALP"/>
    <property type="match status" value="1"/>
</dbReference>
<dbReference type="SUPFAM" id="SSF53686">
    <property type="entry name" value="Tryptophan synthase beta subunit-like PLP-dependent enzymes"/>
    <property type="match status" value="1"/>
</dbReference>
<keyword id="KW-0021">Allosteric enzyme</keyword>
<keyword id="KW-0067">ATP-binding</keyword>
<keyword id="KW-0106">Calcium</keyword>
<keyword id="KW-0413">Isomerase</keyword>
<keyword id="KW-0456">Lyase</keyword>
<keyword id="KW-0460">Magnesium</keyword>
<keyword id="KW-0464">Manganese</keyword>
<keyword id="KW-0479">Metal-binding</keyword>
<keyword id="KW-0547">Nucleotide-binding</keyword>
<keyword id="KW-0663">Pyridoxal phosphate</keyword>
<keyword id="KW-1185">Reference proteome</keyword>
<keyword id="KW-0702">S-nitrosylation</keyword>
<protein>
    <recommendedName>
        <fullName evidence="6">Serine racemase</fullName>
        <ecNumber evidence="4 5">5.1.1.18</ecNumber>
    </recommendedName>
    <alternativeName>
        <fullName evidence="6">D-serine dehydratase</fullName>
        <shortName>D-serine ammonia-lyase</shortName>
        <ecNumber evidence="4 5">4.3.1.18</ecNumber>
    </alternativeName>
    <alternativeName>
        <fullName evidence="6">L-serine dehydratase</fullName>
        <shortName>L-serine ammonia-lyase</shortName>
        <ecNumber evidence="4 5">4.3.1.17</ecNumber>
    </alternativeName>
</protein>
<reference key="1">
    <citation type="journal article" date="2009" name="Phytochemistry">
        <title>Occurrence of D-serine in rice and characterization of rice serine racemase.</title>
        <authorList>
            <person name="Gogami Y."/>
            <person name="Ito K."/>
            <person name="Kamitani Y."/>
            <person name="Matsushima Y."/>
            <person name="Oikawa T."/>
        </authorList>
    </citation>
    <scope>NUCLEOTIDE SEQUENCE [MRNA]</scope>
    <scope>FUNCTION</scope>
    <scope>CATALYTIC ACTIVITY</scope>
    <scope>ACTIVITY REGULATION</scope>
    <scope>BIOPHYSICOCHEMICAL PROPERTIES</scope>
    <scope>SUBUNIT</scope>
    <source>
        <strain>cv. Nipponbare</strain>
    </source>
</reference>
<reference key="2">
    <citation type="journal article" date="2002" name="Nature">
        <title>Sequence and analysis of rice chromosome 4.</title>
        <authorList>
            <person name="Feng Q."/>
            <person name="Zhang Y."/>
            <person name="Hao P."/>
            <person name="Wang S."/>
            <person name="Fu G."/>
            <person name="Huang Y."/>
            <person name="Li Y."/>
            <person name="Zhu J."/>
            <person name="Liu Y."/>
            <person name="Hu X."/>
            <person name="Jia P."/>
            <person name="Zhang Y."/>
            <person name="Zhao Q."/>
            <person name="Ying K."/>
            <person name="Yu S."/>
            <person name="Tang Y."/>
            <person name="Weng Q."/>
            <person name="Zhang L."/>
            <person name="Lu Y."/>
            <person name="Mu J."/>
            <person name="Lu Y."/>
            <person name="Zhang L.S."/>
            <person name="Yu Z."/>
            <person name="Fan D."/>
            <person name="Liu X."/>
            <person name="Lu T."/>
            <person name="Li C."/>
            <person name="Wu Y."/>
            <person name="Sun T."/>
            <person name="Lei H."/>
            <person name="Li T."/>
            <person name="Hu H."/>
            <person name="Guan J."/>
            <person name="Wu M."/>
            <person name="Zhang R."/>
            <person name="Zhou B."/>
            <person name="Chen Z."/>
            <person name="Chen L."/>
            <person name="Jin Z."/>
            <person name="Wang R."/>
            <person name="Yin H."/>
            <person name="Cai Z."/>
            <person name="Ren S."/>
            <person name="Lv G."/>
            <person name="Gu W."/>
            <person name="Zhu G."/>
            <person name="Tu Y."/>
            <person name="Jia J."/>
            <person name="Zhang Y."/>
            <person name="Chen J."/>
            <person name="Kang H."/>
            <person name="Chen X."/>
            <person name="Shao C."/>
            <person name="Sun Y."/>
            <person name="Hu Q."/>
            <person name="Zhang X."/>
            <person name="Zhang W."/>
            <person name="Wang L."/>
            <person name="Ding C."/>
            <person name="Sheng H."/>
            <person name="Gu J."/>
            <person name="Chen S."/>
            <person name="Ni L."/>
            <person name="Zhu F."/>
            <person name="Chen W."/>
            <person name="Lan L."/>
            <person name="Lai Y."/>
            <person name="Cheng Z."/>
            <person name="Gu M."/>
            <person name="Jiang J."/>
            <person name="Li J."/>
            <person name="Hong G."/>
            <person name="Xue Y."/>
            <person name="Han B."/>
        </authorList>
    </citation>
    <scope>NUCLEOTIDE SEQUENCE [LARGE SCALE GENOMIC DNA]</scope>
    <source>
        <strain>cv. Nipponbare</strain>
    </source>
</reference>
<reference key="3">
    <citation type="journal article" date="2005" name="Nature">
        <title>The map-based sequence of the rice genome.</title>
        <authorList>
            <consortium name="International rice genome sequencing project (IRGSP)"/>
        </authorList>
    </citation>
    <scope>NUCLEOTIDE SEQUENCE [LARGE SCALE GENOMIC DNA]</scope>
    <source>
        <strain>cv. Nipponbare</strain>
    </source>
</reference>
<reference key="4">
    <citation type="journal article" date="2008" name="Nucleic Acids Res.">
        <title>The rice annotation project database (RAP-DB): 2008 update.</title>
        <authorList>
            <consortium name="The rice annotation project (RAP)"/>
        </authorList>
    </citation>
    <scope>GENOME REANNOTATION</scope>
    <source>
        <strain>cv. Nipponbare</strain>
    </source>
</reference>
<reference key="5">
    <citation type="journal article" date="2013" name="Rice">
        <title>Improvement of the Oryza sativa Nipponbare reference genome using next generation sequence and optical map data.</title>
        <authorList>
            <person name="Kawahara Y."/>
            <person name="de la Bastide M."/>
            <person name="Hamilton J.P."/>
            <person name="Kanamori H."/>
            <person name="McCombie W.R."/>
            <person name="Ouyang S."/>
            <person name="Schwartz D.C."/>
            <person name="Tanaka T."/>
            <person name="Wu J."/>
            <person name="Zhou S."/>
            <person name="Childs K.L."/>
            <person name="Davidson R.M."/>
            <person name="Lin H."/>
            <person name="Quesada-Ocampo L."/>
            <person name="Vaillancourt B."/>
            <person name="Sakai H."/>
            <person name="Lee S.S."/>
            <person name="Kim J."/>
            <person name="Numa H."/>
            <person name="Itoh T."/>
            <person name="Buell C.R."/>
            <person name="Matsumoto T."/>
        </authorList>
    </citation>
    <scope>GENOME REANNOTATION</scope>
    <source>
        <strain>cv. Nipponbare</strain>
    </source>
</reference>
<reference key="6">
    <citation type="journal article" date="2005" name="PLoS Biol.">
        <title>The genomes of Oryza sativa: a history of duplications.</title>
        <authorList>
            <person name="Yu J."/>
            <person name="Wang J."/>
            <person name="Lin W."/>
            <person name="Li S."/>
            <person name="Li H."/>
            <person name="Zhou J."/>
            <person name="Ni P."/>
            <person name="Dong W."/>
            <person name="Hu S."/>
            <person name="Zeng C."/>
            <person name="Zhang J."/>
            <person name="Zhang Y."/>
            <person name="Li R."/>
            <person name="Xu Z."/>
            <person name="Li S."/>
            <person name="Li X."/>
            <person name="Zheng H."/>
            <person name="Cong L."/>
            <person name="Lin L."/>
            <person name="Yin J."/>
            <person name="Geng J."/>
            <person name="Li G."/>
            <person name="Shi J."/>
            <person name="Liu J."/>
            <person name="Lv H."/>
            <person name="Li J."/>
            <person name="Wang J."/>
            <person name="Deng Y."/>
            <person name="Ran L."/>
            <person name="Shi X."/>
            <person name="Wang X."/>
            <person name="Wu Q."/>
            <person name="Li C."/>
            <person name="Ren X."/>
            <person name="Wang J."/>
            <person name="Wang X."/>
            <person name="Li D."/>
            <person name="Liu D."/>
            <person name="Zhang X."/>
            <person name="Ji Z."/>
            <person name="Zhao W."/>
            <person name="Sun Y."/>
            <person name="Zhang Z."/>
            <person name="Bao J."/>
            <person name="Han Y."/>
            <person name="Dong L."/>
            <person name="Ji J."/>
            <person name="Chen P."/>
            <person name="Wu S."/>
            <person name="Liu J."/>
            <person name="Xiao Y."/>
            <person name="Bu D."/>
            <person name="Tan J."/>
            <person name="Yang L."/>
            <person name="Ye C."/>
            <person name="Zhang J."/>
            <person name="Xu J."/>
            <person name="Zhou Y."/>
            <person name="Yu Y."/>
            <person name="Zhang B."/>
            <person name="Zhuang S."/>
            <person name="Wei H."/>
            <person name="Liu B."/>
            <person name="Lei M."/>
            <person name="Yu H."/>
            <person name="Li Y."/>
            <person name="Xu H."/>
            <person name="Wei S."/>
            <person name="He X."/>
            <person name="Fang L."/>
            <person name="Zhang Z."/>
            <person name="Zhang Y."/>
            <person name="Huang X."/>
            <person name="Su Z."/>
            <person name="Tong W."/>
            <person name="Li J."/>
            <person name="Tong Z."/>
            <person name="Li S."/>
            <person name="Ye J."/>
            <person name="Wang L."/>
            <person name="Fang L."/>
            <person name="Lei T."/>
            <person name="Chen C.-S."/>
            <person name="Chen H.-C."/>
            <person name="Xu Z."/>
            <person name="Li H."/>
            <person name="Huang H."/>
            <person name="Zhang F."/>
            <person name="Xu H."/>
            <person name="Li N."/>
            <person name="Zhao C."/>
            <person name="Li S."/>
            <person name="Dong L."/>
            <person name="Huang Y."/>
            <person name="Li L."/>
            <person name="Xi Y."/>
            <person name="Qi Q."/>
            <person name="Li W."/>
            <person name="Zhang B."/>
            <person name="Hu W."/>
            <person name="Zhang Y."/>
            <person name="Tian X."/>
            <person name="Jiao Y."/>
            <person name="Liang X."/>
            <person name="Jin J."/>
            <person name="Gao L."/>
            <person name="Zheng W."/>
            <person name="Hao B."/>
            <person name="Liu S.-M."/>
            <person name="Wang W."/>
            <person name="Yuan L."/>
            <person name="Cao M."/>
            <person name="McDermott J."/>
            <person name="Samudrala R."/>
            <person name="Wang J."/>
            <person name="Wong G.K.-S."/>
            <person name="Yang H."/>
        </authorList>
    </citation>
    <scope>NUCLEOTIDE SEQUENCE [LARGE SCALE GENOMIC DNA]</scope>
    <source>
        <strain>cv. Nipponbare</strain>
    </source>
</reference>
<reference key="7">
    <citation type="journal article" date="2003" name="Science">
        <title>Collection, mapping, and annotation of over 28,000 cDNA clones from japonica rice.</title>
        <authorList>
            <consortium name="The rice full-length cDNA consortium"/>
        </authorList>
    </citation>
    <scope>NUCLEOTIDE SEQUENCE [LARGE SCALE MRNA]</scope>
    <source>
        <strain>cv. Nipponbare</strain>
    </source>
</reference>
<reference key="8">
    <citation type="journal article" date="2010" name="Chem. Biodivers.">
        <title>Site-directed mutagenesis of rice serine racemase: evidence that Glu219 and Asp225 mediate the effects of Mg2+ on the activity.</title>
        <authorList>
            <person name="Gogami Y."/>
            <person name="Kobayashi A."/>
            <person name="Ikeuchi T."/>
            <person name="Oikawa T."/>
        </authorList>
    </citation>
    <scope>MUTAGENESIS OF GLU-219 AND ASP-225</scope>
    <scope>FUNCTION</scope>
    <scope>BIOPHYSICOCHEMICAL PROPERTIES</scope>
    <scope>CATALYTIC ACTIVITY</scope>
    <scope>ACTIVITY REGULATION</scope>
</reference>
<accession>Q7XSN8</accession>
<accession>A0A0P0WDF8</accession>
<comment type="function">
    <text evidence="4 5">Catalyzes the synthesis of D-serine from L-serine (PubMed:19249065, PubMed:20564571). Has dehydratase activity towards both L-serine and D-serine (PubMed:19249065, PubMed:20564571).</text>
</comment>
<comment type="catalytic activity">
    <reaction evidence="4 5">
        <text>L-serine = D-serine</text>
        <dbReference type="Rhea" id="RHEA:10980"/>
        <dbReference type="ChEBI" id="CHEBI:33384"/>
        <dbReference type="ChEBI" id="CHEBI:35247"/>
        <dbReference type="EC" id="5.1.1.18"/>
    </reaction>
    <physiologicalReaction direction="left-to-right" evidence="4 5">
        <dbReference type="Rhea" id="RHEA:10981"/>
    </physiologicalReaction>
</comment>
<comment type="catalytic activity">
    <reaction evidence="4 5">
        <text>L-serine = pyruvate + NH4(+)</text>
        <dbReference type="Rhea" id="RHEA:19169"/>
        <dbReference type="ChEBI" id="CHEBI:15361"/>
        <dbReference type="ChEBI" id="CHEBI:28938"/>
        <dbReference type="ChEBI" id="CHEBI:33384"/>
        <dbReference type="EC" id="4.3.1.17"/>
    </reaction>
    <physiologicalReaction direction="left-to-right" evidence="4 5">
        <dbReference type="Rhea" id="RHEA:19170"/>
    </physiologicalReaction>
</comment>
<comment type="catalytic activity">
    <reaction evidence="4 5">
        <text>D-serine = pyruvate + NH4(+)</text>
        <dbReference type="Rhea" id="RHEA:13977"/>
        <dbReference type="ChEBI" id="CHEBI:15361"/>
        <dbReference type="ChEBI" id="CHEBI:28938"/>
        <dbReference type="ChEBI" id="CHEBI:35247"/>
        <dbReference type="EC" id="4.3.1.18"/>
    </reaction>
    <physiologicalReaction direction="left-to-right" evidence="4 5">
        <dbReference type="Rhea" id="RHEA:13978"/>
    </physiologicalReaction>
</comment>
<comment type="cofactor">
    <cofactor evidence="2">
        <name>Mg(2+)</name>
        <dbReference type="ChEBI" id="CHEBI:18420"/>
    </cofactor>
    <cofactor evidence="2">
        <name>Mn(2+)</name>
        <dbReference type="ChEBI" id="CHEBI:29035"/>
    </cofactor>
    <cofactor evidence="2">
        <name>Ca(2+)</name>
        <dbReference type="ChEBI" id="CHEBI:29108"/>
    </cofactor>
</comment>
<comment type="cofactor">
    <cofactor evidence="1">
        <name>pyridoxal 5'-phosphate</name>
        <dbReference type="ChEBI" id="CHEBI:597326"/>
    </cofactor>
</comment>
<comment type="activity regulation">
    <text evidence="4 5">Inhibited by semicarbazide, hydroxylamine, aminooxyacetate, sodium borate or phenylhydrazine (PubMed:19249065). Racemase activity is enhanced by Ca(2+), Mg(2+) and is decreased by ATP, Cu(2+), Zn(2+) (PubMed:19249065, PubMed:20564571). Hydratase activity is enhanced by ATP and is decreased by Ca(2+), Mg(2+), Co(2+), Cu(2+), Ni(2+), Zn(2+) (PubMed:19249065, PubMed:20564571).</text>
</comment>
<comment type="biophysicochemical properties">
    <kinetics>
        <KM evidence="4 5">18 mM for L-serine (racemase activity)</KM>
        <KM evidence="4 5">20 mM for D-serine (racemase activity)</KM>
        <KM evidence="4 5">28 mM for L-serine (dehydratase activity)</KM>
        <KM evidence="4 5">19 mM for L-serine (dehydratase activity)</KM>
    </kinetics>
    <phDependence>
        <text evidence="4 5">Optimum pH is 9.5 for racemization and 9.0 for hydration.</text>
    </phDependence>
    <temperatureDependence>
        <text evidence="4 5">Optimum temperature is 35 degrees Celsius (racemase or dehydratase activity).</text>
    </temperatureDependence>
</comment>
<comment type="subunit">
    <text evidence="4">Homodimer.</text>
</comment>
<comment type="similarity">
    <text evidence="7">Belongs to the serine/threonine dehydratase family.</text>
</comment>
<feature type="chain" id="PRO_0000420348" description="Serine racemase">
    <location>
        <begin position="1"/>
        <end position="339"/>
    </location>
</feature>
<feature type="active site" description="Proton acceptor" evidence="1">
    <location>
        <position position="68"/>
    </location>
</feature>
<feature type="active site" description="Proton acceptor" evidence="1">
    <location>
        <position position="93"/>
    </location>
</feature>
<feature type="binding site" evidence="2">
    <location>
        <position position="43"/>
    </location>
    <ligand>
        <name>ATP</name>
        <dbReference type="ChEBI" id="CHEBI:30616"/>
    </ligand>
</feature>
<feature type="binding site" evidence="1">
    <location>
        <position position="63"/>
    </location>
    <ligand>
        <name>ATP</name>
        <dbReference type="ChEBI" id="CHEBI:30616"/>
    </ligand>
</feature>
<feature type="binding site" evidence="2">
    <location>
        <position position="90"/>
    </location>
    <ligand>
        <name>Ca(2+)</name>
        <dbReference type="ChEBI" id="CHEBI:29108"/>
        <label>1</label>
    </ligand>
</feature>
<feature type="binding site" evidence="2">
    <location>
        <position position="95"/>
    </location>
    <ligand>
        <name>pyridoxal 5'-phosphate</name>
        <dbReference type="ChEBI" id="CHEBI:597326"/>
    </ligand>
</feature>
<feature type="binding site" evidence="1">
    <location>
        <position position="130"/>
    </location>
    <ligand>
        <name>ATP</name>
        <dbReference type="ChEBI" id="CHEBI:30616"/>
    </ligand>
</feature>
<feature type="binding site" evidence="2">
    <location>
        <position position="187"/>
    </location>
    <ligand>
        <name>Mg(2+)</name>
        <dbReference type="ChEBI" id="CHEBI:18420"/>
        <label>1</label>
    </ligand>
</feature>
<feature type="binding site" evidence="2">
    <location>
        <position position="195"/>
    </location>
    <ligand>
        <name>pyridoxal 5'-phosphate</name>
        <dbReference type="ChEBI" id="CHEBI:597326"/>
    </ligand>
</feature>
<feature type="binding site" evidence="2">
    <location>
        <position position="196"/>
    </location>
    <ligand>
        <name>pyridoxal 5'-phosphate</name>
        <dbReference type="ChEBI" id="CHEBI:597326"/>
    </ligand>
</feature>
<feature type="binding site" evidence="2">
    <location>
        <position position="197"/>
    </location>
    <ligand>
        <name>pyridoxal 5'-phosphate</name>
        <dbReference type="ChEBI" id="CHEBI:597326"/>
    </ligand>
</feature>
<feature type="binding site" evidence="2">
    <location>
        <position position="219"/>
    </location>
    <ligand>
        <name>Ca(2+)</name>
        <dbReference type="ChEBI" id="CHEBI:29108"/>
        <label>2</label>
    </ligand>
</feature>
<feature type="binding site" evidence="2">
    <location>
        <position position="219"/>
    </location>
    <ligand>
        <name>Mg(2+)</name>
        <dbReference type="ChEBI" id="CHEBI:18420"/>
        <label>2</label>
    </ligand>
</feature>
<feature type="binding site" evidence="2">
    <location>
        <position position="219"/>
    </location>
    <ligand>
        <name>Mn(2+)</name>
        <dbReference type="ChEBI" id="CHEBI:29035"/>
    </ligand>
</feature>
<feature type="binding site" evidence="2">
    <location>
        <position position="223"/>
    </location>
    <ligand>
        <name>Ca(2+)</name>
        <dbReference type="ChEBI" id="CHEBI:29108"/>
        <label>2</label>
    </ligand>
</feature>
<feature type="binding site" evidence="2">
    <location>
        <position position="223"/>
    </location>
    <ligand>
        <name>Mg(2+)</name>
        <dbReference type="ChEBI" id="CHEBI:18420"/>
        <label>2</label>
    </ligand>
</feature>
<feature type="binding site" evidence="2">
    <location>
        <position position="223"/>
    </location>
    <ligand>
        <name>Mn(2+)</name>
        <dbReference type="ChEBI" id="CHEBI:29035"/>
    </ligand>
</feature>
<feature type="binding site" evidence="2">
    <location>
        <position position="225"/>
    </location>
    <ligand>
        <name>Ca(2+)</name>
        <dbReference type="ChEBI" id="CHEBI:29108"/>
        <label>2</label>
    </ligand>
</feature>
<feature type="binding site" evidence="2">
    <location>
        <position position="225"/>
    </location>
    <ligand>
        <name>Mg(2+)</name>
        <dbReference type="ChEBI" id="CHEBI:18420"/>
        <label>2</label>
    </ligand>
</feature>
<feature type="binding site" evidence="2">
    <location>
        <position position="225"/>
    </location>
    <ligand>
        <name>Mn(2+)</name>
        <dbReference type="ChEBI" id="CHEBI:29035"/>
    </ligand>
</feature>
<feature type="binding site" evidence="2">
    <location>
        <position position="287"/>
    </location>
    <ligand>
        <name>ATP</name>
        <dbReference type="ChEBI" id="CHEBI:30616"/>
    </ligand>
</feature>
<feature type="binding site" evidence="2">
    <location>
        <position position="323"/>
    </location>
    <ligand>
        <name>pyridoxal 5'-phosphate</name>
        <dbReference type="ChEBI" id="CHEBI:597326"/>
    </ligand>
</feature>
<feature type="binding site" evidence="2">
    <location>
        <position position="326"/>
    </location>
    <ligand>
        <name>ATP</name>
        <dbReference type="ChEBI" id="CHEBI:30616"/>
    </ligand>
</feature>
<feature type="modified residue" description="N6-(pyridoxal phosphate)lysine" evidence="2">
    <location>
        <position position="68"/>
    </location>
</feature>
<feature type="modified residue" description="S-nitrosocysteine" evidence="3">
    <location>
        <position position="122"/>
    </location>
</feature>
<feature type="mutagenesis site" description="Reduces catalytic activity and abolishes the regulatory effect of Mg(2+) addition; when associated with A-225." evidence="5">
    <original>E</original>
    <variation>A</variation>
    <location>
        <position position="219"/>
    </location>
</feature>
<feature type="mutagenesis site" description="Reduces catalytic activity and abolishes the regulatory effect of Mg(2+) addition; when associated with A-219." evidence="5">
    <original>D</original>
    <variation>A</variation>
    <location>
        <position position="225"/>
    </location>
</feature>